<comment type="function">
    <text evidence="2">Part of the processive rRNA transcription and antitermination complex (rrnTAC). The complex forms an RNA-chaperone ring around the RNA exit tunnel of RNA polymerase (RNAP). It supports rapid transcription and antitermination of rRNA operons, cotranscriptional rRNA folding, and annealing of distal rRNA regions to allow correct ribosome biogenesis. This subunit may play a central role in organizing the structure. IMPase activity is not required for its Nus factor function.</text>
</comment>
<comment type="catalytic activity">
    <reaction evidence="2">
        <text>a myo-inositol phosphate + H2O = myo-inositol + phosphate</text>
        <dbReference type="Rhea" id="RHEA:24056"/>
        <dbReference type="ChEBI" id="CHEBI:15377"/>
        <dbReference type="ChEBI" id="CHEBI:17268"/>
        <dbReference type="ChEBI" id="CHEBI:43474"/>
        <dbReference type="ChEBI" id="CHEBI:84139"/>
        <dbReference type="EC" id="3.1.3.25"/>
    </reaction>
</comment>
<comment type="cofactor">
    <cofactor evidence="2">
        <name>Mg(2+)</name>
        <dbReference type="ChEBI" id="CHEBI:18420"/>
    </cofactor>
</comment>
<comment type="subunit">
    <text evidence="2">Homodimer. The rRNA transcription and antitermination complex (rrnTAC) consists of RNA polymerase (RNAP), NusA, NusB, NusE (rpsJ), NusG, SubB, ribosomal protein S4, DNA and precursor rRNA; S4 is more flexible than other subunits.</text>
</comment>
<comment type="subcellular location">
    <subcellularLocation>
        <location evidence="2">Cytoplasm</location>
    </subcellularLocation>
</comment>
<comment type="miscellaneous">
    <text evidence="2">E.coli makes very low amounts of myo-inositol-containing phospholipids, so the catalytic necessity for this enzyme is low.</text>
</comment>
<comment type="similarity">
    <text evidence="3">Belongs to the inositol monophosphatase superfamily.</text>
</comment>
<dbReference type="EC" id="3.1.3.25" evidence="2"/>
<dbReference type="EMBL" id="AE014075">
    <property type="protein sequence ID" value="AAN81509.1"/>
    <property type="molecule type" value="Genomic_DNA"/>
</dbReference>
<dbReference type="RefSeq" id="WP_000553451.1">
    <property type="nucleotide sequence ID" value="NZ_CP051263.1"/>
</dbReference>
<dbReference type="SMR" id="P0ADG5"/>
<dbReference type="STRING" id="199310.c3059"/>
<dbReference type="GeneID" id="75206226"/>
<dbReference type="KEGG" id="ecc:c3059"/>
<dbReference type="eggNOG" id="COG0483">
    <property type="taxonomic scope" value="Bacteria"/>
</dbReference>
<dbReference type="HOGENOM" id="CLU_044118_0_4_6"/>
<dbReference type="BioCyc" id="ECOL199310:C3059-MONOMER"/>
<dbReference type="Proteomes" id="UP000001410">
    <property type="component" value="Chromosome"/>
</dbReference>
<dbReference type="GO" id="GO:0005737">
    <property type="term" value="C:cytoplasm"/>
    <property type="evidence" value="ECO:0007669"/>
    <property type="project" value="UniProtKB-SubCell"/>
</dbReference>
<dbReference type="GO" id="GO:0008934">
    <property type="term" value="F:inositol monophosphate 1-phosphatase activity"/>
    <property type="evidence" value="ECO:0007669"/>
    <property type="project" value="InterPro"/>
</dbReference>
<dbReference type="GO" id="GO:0046872">
    <property type="term" value="F:metal ion binding"/>
    <property type="evidence" value="ECO:0007669"/>
    <property type="project" value="UniProtKB-KW"/>
</dbReference>
<dbReference type="GO" id="GO:0003723">
    <property type="term" value="F:RNA binding"/>
    <property type="evidence" value="ECO:0007669"/>
    <property type="project" value="UniProtKB-KW"/>
</dbReference>
<dbReference type="GO" id="GO:0006020">
    <property type="term" value="P:inositol metabolic process"/>
    <property type="evidence" value="ECO:0007669"/>
    <property type="project" value="TreeGrafter"/>
</dbReference>
<dbReference type="GO" id="GO:0046854">
    <property type="term" value="P:phosphatidylinositol phosphate biosynthetic process"/>
    <property type="evidence" value="ECO:0007669"/>
    <property type="project" value="InterPro"/>
</dbReference>
<dbReference type="GO" id="GO:0042254">
    <property type="term" value="P:ribosome biogenesis"/>
    <property type="evidence" value="ECO:0007669"/>
    <property type="project" value="UniProtKB-KW"/>
</dbReference>
<dbReference type="GO" id="GO:0007165">
    <property type="term" value="P:signal transduction"/>
    <property type="evidence" value="ECO:0007669"/>
    <property type="project" value="TreeGrafter"/>
</dbReference>
<dbReference type="GO" id="GO:0031564">
    <property type="term" value="P:transcription antitermination"/>
    <property type="evidence" value="ECO:0007669"/>
    <property type="project" value="UniProtKB-KW"/>
</dbReference>
<dbReference type="CDD" id="cd01639">
    <property type="entry name" value="IMPase"/>
    <property type="match status" value="1"/>
</dbReference>
<dbReference type="FunFam" id="3.30.540.10:FF:000003">
    <property type="entry name" value="Inositol-1-monophosphatase"/>
    <property type="match status" value="1"/>
</dbReference>
<dbReference type="FunFam" id="3.40.190.80:FF:000004">
    <property type="entry name" value="Inositol-1-monophosphatase"/>
    <property type="match status" value="1"/>
</dbReference>
<dbReference type="Gene3D" id="3.40.190.80">
    <property type="match status" value="1"/>
</dbReference>
<dbReference type="Gene3D" id="3.30.540.10">
    <property type="entry name" value="Fructose-1,6-Bisphosphatase, subunit A, domain 1"/>
    <property type="match status" value="1"/>
</dbReference>
<dbReference type="InterPro" id="IPR033942">
    <property type="entry name" value="IMPase"/>
</dbReference>
<dbReference type="InterPro" id="IPR020583">
    <property type="entry name" value="Inositol_monoP_metal-BS"/>
</dbReference>
<dbReference type="InterPro" id="IPR000760">
    <property type="entry name" value="Inositol_monophosphatase-like"/>
</dbReference>
<dbReference type="InterPro" id="IPR020550">
    <property type="entry name" value="Inositol_monophosphatase_CS"/>
</dbReference>
<dbReference type="InterPro" id="IPR022337">
    <property type="entry name" value="Inositol_monophosphatase_SuhB"/>
</dbReference>
<dbReference type="NCBIfam" id="NF008027">
    <property type="entry name" value="PRK10757.1"/>
    <property type="match status" value="1"/>
</dbReference>
<dbReference type="PANTHER" id="PTHR20854">
    <property type="entry name" value="INOSITOL MONOPHOSPHATASE"/>
    <property type="match status" value="1"/>
</dbReference>
<dbReference type="PANTHER" id="PTHR20854:SF4">
    <property type="entry name" value="INOSITOL-1-MONOPHOSPHATASE-RELATED"/>
    <property type="match status" value="1"/>
</dbReference>
<dbReference type="Pfam" id="PF00459">
    <property type="entry name" value="Inositol_P"/>
    <property type="match status" value="1"/>
</dbReference>
<dbReference type="PRINTS" id="PR00377">
    <property type="entry name" value="IMPHPHTASES"/>
</dbReference>
<dbReference type="PRINTS" id="PR01959">
    <property type="entry name" value="SBIMPHPHTASE"/>
</dbReference>
<dbReference type="SUPFAM" id="SSF56655">
    <property type="entry name" value="Carbohydrate phosphatase"/>
    <property type="match status" value="1"/>
</dbReference>
<dbReference type="PROSITE" id="PS00629">
    <property type="entry name" value="IMP_1"/>
    <property type="match status" value="1"/>
</dbReference>
<dbReference type="PROSITE" id="PS00630">
    <property type="entry name" value="IMP_2"/>
    <property type="match status" value="1"/>
</dbReference>
<reference key="1">
    <citation type="journal article" date="2002" name="Proc. Natl. Acad. Sci. U.S.A.">
        <title>Extensive mosaic structure revealed by the complete genome sequence of uropathogenic Escherichia coli.</title>
        <authorList>
            <person name="Welch R.A."/>
            <person name="Burland V."/>
            <person name="Plunkett G. III"/>
            <person name="Redford P."/>
            <person name="Roesch P."/>
            <person name="Rasko D."/>
            <person name="Buckles E.L."/>
            <person name="Liou S.-R."/>
            <person name="Boutin A."/>
            <person name="Hackett J."/>
            <person name="Stroud D."/>
            <person name="Mayhew G.F."/>
            <person name="Rose D.J."/>
            <person name="Zhou S."/>
            <person name="Schwartz D.C."/>
            <person name="Perna N.T."/>
            <person name="Mobley H.L.T."/>
            <person name="Donnenberg M.S."/>
            <person name="Blattner F.R."/>
        </authorList>
    </citation>
    <scope>NUCLEOTIDE SEQUENCE [LARGE SCALE GENOMIC DNA]</scope>
    <source>
        <strain>CFT073 / ATCC 700928 / UPEC</strain>
    </source>
</reference>
<organism>
    <name type="scientific">Escherichia coli O6:H1 (strain CFT073 / ATCC 700928 / UPEC)</name>
    <dbReference type="NCBI Taxonomy" id="199310"/>
    <lineage>
        <taxon>Bacteria</taxon>
        <taxon>Pseudomonadati</taxon>
        <taxon>Pseudomonadota</taxon>
        <taxon>Gammaproteobacteria</taxon>
        <taxon>Enterobacterales</taxon>
        <taxon>Enterobacteriaceae</taxon>
        <taxon>Escherichia</taxon>
    </lineage>
</organism>
<sequence>MHPMLNIAVRAARKAGNLIAKNYETPDAVEASQKGSNDFVTNVDKAAEAVIIDTIRKSYPQHTIITEESGELEGTDQDVQWVIDPLDGTTNFIKRLPHFAVSIAVRIKGRTEVAVVYDPMRNELFTATRGQGAQLNGYRLRGSTARDLDGTILATGFPFKAKQYATTYINIVGKLFNECADFRRTGSAALDLAYVAAGRVDGFFEIGLRPWDFAAGELLVREAGGIVSDFTGGHNYMLTGNIVAGNPRVVKAMLANMRDELSDALKR</sequence>
<accession>P0ADG5</accession>
<accession>P22783</accession>
<accession>P77511</accession>
<accession>Q8X2E6</accession>
<gene>
    <name type="primary">suhB</name>
    <name type="ordered locus">c3059</name>
</gene>
<proteinExistence type="inferred from homology"/>
<evidence type="ECO:0000250" key="1"/>
<evidence type="ECO:0000250" key="2">
    <source>
        <dbReference type="UniProtKB" id="P0ADG4"/>
    </source>
</evidence>
<evidence type="ECO:0000305" key="3"/>
<keyword id="KW-0143">Chaperone</keyword>
<keyword id="KW-0963">Cytoplasm</keyword>
<keyword id="KW-0378">Hydrolase</keyword>
<keyword id="KW-0460">Magnesium</keyword>
<keyword id="KW-0479">Metal-binding</keyword>
<keyword id="KW-1185">Reference proteome</keyword>
<keyword id="KW-0690">Ribosome biogenesis</keyword>
<keyword id="KW-0694">RNA-binding</keyword>
<keyword id="KW-0804">Transcription</keyword>
<keyword id="KW-0889">Transcription antitermination</keyword>
<keyword id="KW-0805">Transcription regulation</keyword>
<name>SUHB_ECOL6</name>
<feature type="chain" id="PRO_0000142561" description="Nus factor SuhB">
    <location>
        <begin position="1"/>
        <end position="267"/>
    </location>
</feature>
<feature type="binding site" evidence="2">
    <location>
        <position position="67"/>
    </location>
    <ligand>
        <name>Mg(2+)</name>
        <dbReference type="ChEBI" id="CHEBI:18420"/>
    </ligand>
</feature>
<feature type="binding site" evidence="1">
    <location>
        <position position="67"/>
    </location>
    <ligand>
        <name>substrate</name>
    </ligand>
</feature>
<feature type="binding site" evidence="2">
    <location>
        <position position="84"/>
    </location>
    <ligand>
        <name>Mg(2+)</name>
        <dbReference type="ChEBI" id="CHEBI:18420"/>
    </ligand>
</feature>
<feature type="binding site" evidence="1">
    <location>
        <begin position="86"/>
        <end position="89"/>
    </location>
    <ligand>
        <name>substrate</name>
    </ligand>
</feature>
<feature type="binding site" evidence="2">
    <location>
        <position position="86"/>
    </location>
    <ligand>
        <name>Mg(2+)</name>
        <dbReference type="ChEBI" id="CHEBI:18420"/>
    </ligand>
</feature>
<feature type="binding site" evidence="1">
    <location>
        <position position="183"/>
    </location>
    <ligand>
        <name>substrate</name>
    </ligand>
</feature>
<feature type="binding site" evidence="1">
    <location>
        <position position="212"/>
    </location>
    <ligand>
        <name>substrate</name>
    </ligand>
</feature>
<protein>
    <recommendedName>
        <fullName evidence="2">Nus factor SuhB</fullName>
    </recommendedName>
    <alternativeName>
        <fullName>Inositol-1-monophosphatase</fullName>
        <shortName>I-1-Pase</shortName>
        <shortName>IMPase</shortName>
        <shortName>Inositol-1-phosphatase</shortName>
        <ecNumber evidence="2">3.1.3.25</ecNumber>
    </alternativeName>
</protein>